<protein>
    <recommendedName>
        <fullName>Sterol 24-C-methyltransferase</fullName>
        <ecNumber>2.1.1.41</ecNumber>
    </recommendedName>
    <alternativeName>
        <fullName>Delta(24)-sterol C-methyltransferase</fullName>
    </alternativeName>
</protein>
<evidence type="ECO:0000250" key="1"/>
<evidence type="ECO:0000255" key="2">
    <source>
        <dbReference type="PROSITE-ProRule" id="PRU01022"/>
    </source>
</evidence>
<organism>
    <name type="scientific">Yarrowia lipolytica (strain CLIB 122 / E 150)</name>
    <name type="common">Yeast</name>
    <name type="synonym">Candida lipolytica</name>
    <dbReference type="NCBI Taxonomy" id="284591"/>
    <lineage>
        <taxon>Eukaryota</taxon>
        <taxon>Fungi</taxon>
        <taxon>Dikarya</taxon>
        <taxon>Ascomycota</taxon>
        <taxon>Saccharomycotina</taxon>
        <taxon>Dipodascomycetes</taxon>
        <taxon>Dipodascales</taxon>
        <taxon>Dipodascales incertae sedis</taxon>
        <taxon>Yarrowia</taxon>
    </lineage>
</organism>
<name>ERG6_YARLI</name>
<keyword id="KW-0444">Lipid biosynthesis</keyword>
<keyword id="KW-0443">Lipid metabolism</keyword>
<keyword id="KW-0489">Methyltransferase</keyword>
<keyword id="KW-1185">Reference proteome</keyword>
<keyword id="KW-0949">S-adenosyl-L-methionine</keyword>
<keyword id="KW-0752">Steroid biosynthesis</keyword>
<keyword id="KW-0753">Steroid metabolism</keyword>
<keyword id="KW-0756">Sterol biosynthesis</keyword>
<keyword id="KW-1207">Sterol metabolism</keyword>
<keyword id="KW-0808">Transferase</keyword>
<proteinExistence type="inferred from homology"/>
<reference key="1">
    <citation type="journal article" date="2004" name="Nature">
        <title>Genome evolution in yeasts.</title>
        <authorList>
            <person name="Dujon B."/>
            <person name="Sherman D."/>
            <person name="Fischer G."/>
            <person name="Durrens P."/>
            <person name="Casaregola S."/>
            <person name="Lafontaine I."/>
            <person name="de Montigny J."/>
            <person name="Marck C."/>
            <person name="Neuveglise C."/>
            <person name="Talla E."/>
            <person name="Goffard N."/>
            <person name="Frangeul L."/>
            <person name="Aigle M."/>
            <person name="Anthouard V."/>
            <person name="Babour A."/>
            <person name="Barbe V."/>
            <person name="Barnay S."/>
            <person name="Blanchin S."/>
            <person name="Beckerich J.-M."/>
            <person name="Beyne E."/>
            <person name="Bleykasten C."/>
            <person name="Boisrame A."/>
            <person name="Boyer J."/>
            <person name="Cattolico L."/>
            <person name="Confanioleri F."/>
            <person name="de Daruvar A."/>
            <person name="Despons L."/>
            <person name="Fabre E."/>
            <person name="Fairhead C."/>
            <person name="Ferry-Dumazet H."/>
            <person name="Groppi A."/>
            <person name="Hantraye F."/>
            <person name="Hennequin C."/>
            <person name="Jauniaux N."/>
            <person name="Joyet P."/>
            <person name="Kachouri R."/>
            <person name="Kerrest A."/>
            <person name="Koszul R."/>
            <person name="Lemaire M."/>
            <person name="Lesur I."/>
            <person name="Ma L."/>
            <person name="Muller H."/>
            <person name="Nicaud J.-M."/>
            <person name="Nikolski M."/>
            <person name="Oztas S."/>
            <person name="Ozier-Kalogeropoulos O."/>
            <person name="Pellenz S."/>
            <person name="Potier S."/>
            <person name="Richard G.-F."/>
            <person name="Straub M.-L."/>
            <person name="Suleau A."/>
            <person name="Swennen D."/>
            <person name="Tekaia F."/>
            <person name="Wesolowski-Louvel M."/>
            <person name="Westhof E."/>
            <person name="Wirth B."/>
            <person name="Zeniou-Meyer M."/>
            <person name="Zivanovic Y."/>
            <person name="Bolotin-Fukuhara M."/>
            <person name="Thierry A."/>
            <person name="Bouchier C."/>
            <person name="Caudron B."/>
            <person name="Scarpelli C."/>
            <person name="Gaillardin C."/>
            <person name="Weissenbach J."/>
            <person name="Wincker P."/>
            <person name="Souciet J.-L."/>
        </authorList>
    </citation>
    <scope>NUCLEOTIDE SEQUENCE [LARGE SCALE GENOMIC DNA]</scope>
    <source>
        <strain>CLIB 122 / E 150</strain>
    </source>
</reference>
<gene>
    <name type="primary">ERG6</name>
    <name type="ordered locus">YALI0F08701g</name>
</gene>
<sequence length="381" mass="42703">MSSNIKLAQKDYKGDKEFAAALHGKEGHKKHGLGAVMSKNKDAQAAAVEGFFRNWGDKDRSKIEDADEQGRIEDYAGLTKHYYNLVTDFYEYGWGSSFHFSRYYKGEAFRQATARHEHYLAYKMGIQPGMKVLDVGCGVGGPAREIARFTGANIVGLNNNDYQVERGTHYSEVQGFGDQVTYVKGDFMQMDFPDNSFDAVYAIEATVHAPVLEGVYSEIFRVLKPGGVFGVYEWVMTDEYDESNPEHRDICYGIEKGDGIPKMYKREVAVKALENVGFDIEYQEDLAADDAEVPWYYPLAGEWKYVQSLNDIVTIGRTSRLGRMVTMNVIGALEKIGLAPQGSRQVTEALEDAAVNLVAGGKKKLFTPMMLFVSRKPEDKN</sequence>
<accession>Q6C2D9</accession>
<feature type="chain" id="PRO_0000124798" description="Sterol 24-C-methyltransferase">
    <location>
        <begin position="1"/>
        <end position="381"/>
    </location>
</feature>
<dbReference type="EC" id="2.1.1.41"/>
<dbReference type="EMBL" id="CR382132">
    <property type="protein sequence ID" value="CAG77980.1"/>
    <property type="molecule type" value="Genomic_DNA"/>
</dbReference>
<dbReference type="RefSeq" id="XP_505173.1">
    <property type="nucleotide sequence ID" value="XM_505173.1"/>
</dbReference>
<dbReference type="SMR" id="Q6C2D9"/>
<dbReference type="FunCoup" id="Q6C2D9">
    <property type="interactions" value="316"/>
</dbReference>
<dbReference type="STRING" id="284591.Q6C2D9"/>
<dbReference type="ChEMBL" id="CHEMBL3308968"/>
<dbReference type="EnsemblFungi" id="CAG77980">
    <property type="protein sequence ID" value="CAG77980"/>
    <property type="gene ID" value="YALI0_F08701g"/>
</dbReference>
<dbReference type="KEGG" id="yli:2908368"/>
<dbReference type="VEuPathDB" id="FungiDB:YALI0_F08701g"/>
<dbReference type="HOGENOM" id="CLU_039068_5_3_1"/>
<dbReference type="InParanoid" id="Q6C2D9"/>
<dbReference type="OMA" id="AFNKAMH"/>
<dbReference type="OrthoDB" id="63253at4891"/>
<dbReference type="UniPathway" id="UPA00768">
    <property type="reaction ID" value="UER00760"/>
</dbReference>
<dbReference type="Proteomes" id="UP000001300">
    <property type="component" value="Chromosome F"/>
</dbReference>
<dbReference type="GO" id="GO:0005783">
    <property type="term" value="C:endoplasmic reticulum"/>
    <property type="evidence" value="ECO:0000318"/>
    <property type="project" value="GO_Central"/>
</dbReference>
<dbReference type="GO" id="GO:0003838">
    <property type="term" value="F:sterol 24-C-methyltransferase activity"/>
    <property type="evidence" value="ECO:0000318"/>
    <property type="project" value="GO_Central"/>
</dbReference>
<dbReference type="GO" id="GO:0006696">
    <property type="term" value="P:ergosterol biosynthetic process"/>
    <property type="evidence" value="ECO:0000318"/>
    <property type="project" value="GO_Central"/>
</dbReference>
<dbReference type="GO" id="GO:0032259">
    <property type="term" value="P:methylation"/>
    <property type="evidence" value="ECO:0007669"/>
    <property type="project" value="UniProtKB-KW"/>
</dbReference>
<dbReference type="CDD" id="cd02440">
    <property type="entry name" value="AdoMet_MTases"/>
    <property type="match status" value="1"/>
</dbReference>
<dbReference type="FunFam" id="3.40.50.150:FF:000121">
    <property type="entry name" value="Sterol 24-C-methyltransferase"/>
    <property type="match status" value="1"/>
</dbReference>
<dbReference type="Gene3D" id="3.40.50.150">
    <property type="entry name" value="Vaccinia Virus protein VP39"/>
    <property type="match status" value="1"/>
</dbReference>
<dbReference type="InterPro" id="IPR050447">
    <property type="entry name" value="Erg6_SMT_methyltransf"/>
</dbReference>
<dbReference type="InterPro" id="IPR013216">
    <property type="entry name" value="Methyltransf_11"/>
</dbReference>
<dbReference type="InterPro" id="IPR030384">
    <property type="entry name" value="MeTrfase_SMT"/>
</dbReference>
<dbReference type="InterPro" id="IPR029063">
    <property type="entry name" value="SAM-dependent_MTases_sf"/>
</dbReference>
<dbReference type="InterPro" id="IPR013705">
    <property type="entry name" value="Sterol_MeTrfase_C"/>
</dbReference>
<dbReference type="PANTHER" id="PTHR44068:SF1">
    <property type="entry name" value="HYPOTHETICAL LOC100005854"/>
    <property type="match status" value="1"/>
</dbReference>
<dbReference type="PANTHER" id="PTHR44068">
    <property type="entry name" value="ZGC:194242"/>
    <property type="match status" value="1"/>
</dbReference>
<dbReference type="Pfam" id="PF08241">
    <property type="entry name" value="Methyltransf_11"/>
    <property type="match status" value="1"/>
</dbReference>
<dbReference type="Pfam" id="PF08498">
    <property type="entry name" value="Sterol_MT_C"/>
    <property type="match status" value="1"/>
</dbReference>
<dbReference type="SUPFAM" id="SSF53335">
    <property type="entry name" value="S-adenosyl-L-methionine-dependent methyltransferases"/>
    <property type="match status" value="1"/>
</dbReference>
<dbReference type="PROSITE" id="PS51685">
    <property type="entry name" value="SAM_MT_ERG6_SMT"/>
    <property type="match status" value="1"/>
</dbReference>
<comment type="function">
    <text evidence="1">Catalyzes the methyl transfer from S-adenosyl-methionine to the C-24 of zymosterol to form fecosterol.</text>
</comment>
<comment type="catalytic activity">
    <reaction>
        <text>zymosterol + S-adenosyl-L-methionine = fecosterol + S-adenosyl-L-homocysteine + H(+)</text>
        <dbReference type="Rhea" id="RHEA:21128"/>
        <dbReference type="ChEBI" id="CHEBI:15378"/>
        <dbReference type="ChEBI" id="CHEBI:17038"/>
        <dbReference type="ChEBI" id="CHEBI:18252"/>
        <dbReference type="ChEBI" id="CHEBI:57856"/>
        <dbReference type="ChEBI" id="CHEBI:59789"/>
        <dbReference type="EC" id="2.1.1.41"/>
    </reaction>
</comment>
<comment type="pathway">
    <text>Steroid metabolism; ergosterol biosynthesis; ergosterol from zymosterol: step 1/5.</text>
</comment>
<comment type="similarity">
    <text evidence="2">Belongs to the class I-like SAM-binding methyltransferase superfamily. Erg6/SMT family.</text>
</comment>